<evidence type="ECO:0000250" key="1"/>
<evidence type="ECO:0000255" key="2"/>
<evidence type="ECO:0000305" key="3"/>
<gene>
    <name type="primary">HSD2</name>
    <name type="ordered locus">At3g47350</name>
    <name type="ORF">T21L8.100</name>
</gene>
<comment type="subcellular location">
    <subcellularLocation>
        <location evidence="3">Membrane</location>
        <topology evidence="3">Single-pass type II membrane protein</topology>
    </subcellularLocation>
</comment>
<comment type="alternative products">
    <event type="alternative splicing"/>
    <isoform>
        <id>Q9STY8-1</id>
        <name>1</name>
        <sequence type="displayed"/>
    </isoform>
    <text>A number of isoforms are produced. According to EST sequences.</text>
</comment>
<comment type="similarity">
    <text evidence="3">Belongs to the short-chain dehydrogenases/reductases (SDR) family.</text>
</comment>
<organism>
    <name type="scientific">Arabidopsis thaliana</name>
    <name type="common">Mouse-ear cress</name>
    <dbReference type="NCBI Taxonomy" id="3702"/>
    <lineage>
        <taxon>Eukaryota</taxon>
        <taxon>Viridiplantae</taxon>
        <taxon>Streptophyta</taxon>
        <taxon>Embryophyta</taxon>
        <taxon>Tracheophyta</taxon>
        <taxon>Spermatophyta</taxon>
        <taxon>Magnoliopsida</taxon>
        <taxon>eudicotyledons</taxon>
        <taxon>Gunneridae</taxon>
        <taxon>Pentapetalae</taxon>
        <taxon>rosids</taxon>
        <taxon>malvids</taxon>
        <taxon>Brassicales</taxon>
        <taxon>Brassicaceae</taxon>
        <taxon>Camelineae</taxon>
        <taxon>Arabidopsis</taxon>
    </lineage>
</organism>
<accession>Q9STY8</accession>
<name>HSD2_ARATH</name>
<keyword id="KW-0025">Alternative splicing</keyword>
<keyword id="KW-0444">Lipid biosynthesis</keyword>
<keyword id="KW-0443">Lipid metabolism</keyword>
<keyword id="KW-0472">Membrane</keyword>
<keyword id="KW-0521">NADP</keyword>
<keyword id="KW-0560">Oxidoreductase</keyword>
<keyword id="KW-1185">Reference proteome</keyword>
<keyword id="KW-0735">Signal-anchor</keyword>
<keyword id="KW-0752">Steroid biosynthesis</keyword>
<keyword id="KW-0812">Transmembrane</keyword>
<keyword id="KW-1133">Transmembrane helix</keyword>
<dbReference type="EC" id="1.1.1.-"/>
<dbReference type="EMBL" id="AL096860">
    <property type="protein sequence ID" value="CAB51207.1"/>
    <property type="molecule type" value="Genomic_DNA"/>
</dbReference>
<dbReference type="EMBL" id="CP002686">
    <property type="protein sequence ID" value="AEE78268.1"/>
    <property type="molecule type" value="Genomic_DNA"/>
</dbReference>
<dbReference type="PIR" id="T12990">
    <property type="entry name" value="T12990"/>
</dbReference>
<dbReference type="RefSeq" id="NP_190319.1">
    <molecule id="Q9STY8-1"/>
    <property type="nucleotide sequence ID" value="NM_114603.3"/>
</dbReference>
<dbReference type="SMR" id="Q9STY8"/>
<dbReference type="FunCoup" id="Q9STY8">
    <property type="interactions" value="336"/>
</dbReference>
<dbReference type="STRING" id="3702.Q9STY8"/>
<dbReference type="PaxDb" id="3702-AT3G47350.2"/>
<dbReference type="ProteomicsDB" id="232107">
    <molecule id="Q9STY8-1"/>
</dbReference>
<dbReference type="EnsemblPlants" id="AT3G47350.1">
    <molecule id="Q9STY8-1"/>
    <property type="protein sequence ID" value="AT3G47350.1"/>
    <property type="gene ID" value="AT3G47350"/>
</dbReference>
<dbReference type="GeneID" id="823889"/>
<dbReference type="Gramene" id="AT3G47350.1">
    <molecule id="Q9STY8-1"/>
    <property type="protein sequence ID" value="AT3G47350.1"/>
    <property type="gene ID" value="AT3G47350"/>
</dbReference>
<dbReference type="KEGG" id="ath:AT3G47350"/>
<dbReference type="Araport" id="AT3G47350"/>
<dbReference type="TAIR" id="AT3G47350">
    <property type="gene designation" value="HSD2"/>
</dbReference>
<dbReference type="eggNOG" id="KOG1205">
    <property type="taxonomic scope" value="Eukaryota"/>
</dbReference>
<dbReference type="HOGENOM" id="CLU_010194_2_1_1"/>
<dbReference type="InParanoid" id="Q9STY8"/>
<dbReference type="OMA" id="EYTRWLM"/>
<dbReference type="PhylomeDB" id="Q9STY8"/>
<dbReference type="BioCyc" id="ARA:AT3G47350-MONOMER"/>
<dbReference type="PRO" id="PR:Q9STY8"/>
<dbReference type="Proteomes" id="UP000006548">
    <property type="component" value="Chromosome 3"/>
</dbReference>
<dbReference type="ExpressionAtlas" id="Q9STY8">
    <property type="expression patterns" value="baseline and differential"/>
</dbReference>
<dbReference type="GO" id="GO:0016020">
    <property type="term" value="C:membrane"/>
    <property type="evidence" value="ECO:0007669"/>
    <property type="project" value="UniProtKB-SubCell"/>
</dbReference>
<dbReference type="GO" id="GO:0016491">
    <property type="term" value="F:oxidoreductase activity"/>
    <property type="evidence" value="ECO:0007669"/>
    <property type="project" value="UniProtKB-KW"/>
</dbReference>
<dbReference type="GO" id="GO:0006694">
    <property type="term" value="P:steroid biosynthetic process"/>
    <property type="evidence" value="ECO:0007669"/>
    <property type="project" value="UniProtKB-KW"/>
</dbReference>
<dbReference type="Gene3D" id="3.40.50.720">
    <property type="entry name" value="NAD(P)-binding Rossmann-like Domain"/>
    <property type="match status" value="1"/>
</dbReference>
<dbReference type="InterPro" id="IPR036291">
    <property type="entry name" value="NAD(P)-bd_dom_sf"/>
</dbReference>
<dbReference type="InterPro" id="IPR002347">
    <property type="entry name" value="SDR_fam"/>
</dbReference>
<dbReference type="NCBIfam" id="NF004825">
    <property type="entry name" value="PRK06181.1"/>
    <property type="match status" value="1"/>
</dbReference>
<dbReference type="PANTHER" id="PTHR43391:SF76">
    <property type="entry name" value="11-BETA-HYDROXYSTEROID DEHYDROGENASE-LIKE 2-RELATED"/>
    <property type="match status" value="1"/>
</dbReference>
<dbReference type="PANTHER" id="PTHR43391">
    <property type="entry name" value="RETINOL DEHYDROGENASE-RELATED"/>
    <property type="match status" value="1"/>
</dbReference>
<dbReference type="Pfam" id="PF00106">
    <property type="entry name" value="adh_short"/>
    <property type="match status" value="1"/>
</dbReference>
<dbReference type="PRINTS" id="PR00081">
    <property type="entry name" value="GDHRDH"/>
</dbReference>
<dbReference type="PRINTS" id="PR00080">
    <property type="entry name" value="SDRFAMILY"/>
</dbReference>
<dbReference type="SUPFAM" id="SSF51735">
    <property type="entry name" value="NAD(P)-binding Rossmann-fold domains"/>
    <property type="match status" value="1"/>
</dbReference>
<sequence>MDMLHTILNFLLPPLTISFLVLFYPFYLFTKLMSCLKHLHFENVTGKVVLITGASSGIGEHVAYEYAKKGAKLALVARRKDRLEIVAETSRQLGSGDVIIIPGDVSNVEDCKKFIDETIHHFGKLDHLINNAGVPQTVIFEDFTQIQDANSIMDINFWGSTYITYFAIPHLRKSKGKIVVISSATAIIPLQAASVYSASKAALVKFFETLRVEISPDIKITIALPGFISTDMTTPQFKEMYGSDFILSESVSRCAKAIFRGIGRGEAYVIEPSWIKWIFLIKNVCPEIVDYLLDYIFVSYLKPYFKRD</sequence>
<feature type="chain" id="PRO_0000422280" description="11-beta-hydroxysteroid dehydrogenase-like 2">
    <location>
        <begin position="1"/>
        <end position="308"/>
    </location>
</feature>
<feature type="transmembrane region" description="Helical; Signal-anchor for type II membrane protein" evidence="2">
    <location>
        <begin position="10"/>
        <end position="30"/>
    </location>
</feature>
<feature type="active site" description="Proton acceptor" evidence="1">
    <location>
        <position position="196"/>
    </location>
</feature>
<feature type="binding site" evidence="1">
    <location>
        <begin position="53"/>
        <end position="79"/>
    </location>
    <ligand>
        <name>NADP(+)</name>
        <dbReference type="ChEBI" id="CHEBI:58349"/>
    </ligand>
</feature>
<feature type="binding site" evidence="1">
    <location>
        <position position="104"/>
    </location>
    <ligand>
        <name>NADP(+)</name>
        <dbReference type="ChEBI" id="CHEBI:58349"/>
    </ligand>
</feature>
<feature type="binding site" evidence="1">
    <location>
        <position position="183"/>
    </location>
    <ligand>
        <name>substrate</name>
    </ligand>
</feature>
<feature type="binding site" evidence="1">
    <location>
        <begin position="196"/>
        <end position="200"/>
    </location>
    <ligand>
        <name>NADP(+)</name>
        <dbReference type="ChEBI" id="CHEBI:58349"/>
    </ligand>
</feature>
<feature type="binding site" evidence="1">
    <location>
        <position position="200"/>
    </location>
    <ligand>
        <name>NADP(+)</name>
        <dbReference type="ChEBI" id="CHEBI:58349"/>
    </ligand>
</feature>
<reference key="1">
    <citation type="journal article" date="2000" name="Nature">
        <title>Sequence and analysis of chromosome 3 of the plant Arabidopsis thaliana.</title>
        <authorList>
            <person name="Salanoubat M."/>
            <person name="Lemcke K."/>
            <person name="Rieger M."/>
            <person name="Ansorge W."/>
            <person name="Unseld M."/>
            <person name="Fartmann B."/>
            <person name="Valle G."/>
            <person name="Bloecker H."/>
            <person name="Perez-Alonso M."/>
            <person name="Obermaier B."/>
            <person name="Delseny M."/>
            <person name="Boutry M."/>
            <person name="Grivell L.A."/>
            <person name="Mache R."/>
            <person name="Puigdomenech P."/>
            <person name="De Simone V."/>
            <person name="Choisne N."/>
            <person name="Artiguenave F."/>
            <person name="Robert C."/>
            <person name="Brottier P."/>
            <person name="Wincker P."/>
            <person name="Cattolico L."/>
            <person name="Weissenbach J."/>
            <person name="Saurin W."/>
            <person name="Quetier F."/>
            <person name="Schaefer M."/>
            <person name="Mueller-Auer S."/>
            <person name="Gabel C."/>
            <person name="Fuchs M."/>
            <person name="Benes V."/>
            <person name="Wurmbach E."/>
            <person name="Drzonek H."/>
            <person name="Erfle H."/>
            <person name="Jordan N."/>
            <person name="Bangert S."/>
            <person name="Wiedelmann R."/>
            <person name="Kranz H."/>
            <person name="Voss H."/>
            <person name="Holland R."/>
            <person name="Brandt P."/>
            <person name="Nyakatura G."/>
            <person name="Vezzi A."/>
            <person name="D'Angelo M."/>
            <person name="Pallavicini A."/>
            <person name="Toppo S."/>
            <person name="Simionati B."/>
            <person name="Conrad A."/>
            <person name="Hornischer K."/>
            <person name="Kauer G."/>
            <person name="Loehnert T.-H."/>
            <person name="Nordsiek G."/>
            <person name="Reichelt J."/>
            <person name="Scharfe M."/>
            <person name="Schoen O."/>
            <person name="Bargues M."/>
            <person name="Terol J."/>
            <person name="Climent J."/>
            <person name="Navarro P."/>
            <person name="Collado C."/>
            <person name="Perez-Perez A."/>
            <person name="Ottenwaelder B."/>
            <person name="Duchemin D."/>
            <person name="Cooke R."/>
            <person name="Laudie M."/>
            <person name="Berger-Llauro C."/>
            <person name="Purnelle B."/>
            <person name="Masuy D."/>
            <person name="de Haan M."/>
            <person name="Maarse A.C."/>
            <person name="Alcaraz J.-P."/>
            <person name="Cottet A."/>
            <person name="Casacuberta E."/>
            <person name="Monfort A."/>
            <person name="Argiriou A."/>
            <person name="Flores M."/>
            <person name="Liguori R."/>
            <person name="Vitale D."/>
            <person name="Mannhaupt G."/>
            <person name="Haase D."/>
            <person name="Schoof H."/>
            <person name="Rudd S."/>
            <person name="Zaccaria P."/>
            <person name="Mewes H.-W."/>
            <person name="Mayer K.F.X."/>
            <person name="Kaul S."/>
            <person name="Town C.D."/>
            <person name="Koo H.L."/>
            <person name="Tallon L.J."/>
            <person name="Jenkins J."/>
            <person name="Rooney T."/>
            <person name="Rizzo M."/>
            <person name="Walts A."/>
            <person name="Utterback T."/>
            <person name="Fujii C.Y."/>
            <person name="Shea T.P."/>
            <person name="Creasy T.H."/>
            <person name="Haas B."/>
            <person name="Maiti R."/>
            <person name="Wu D."/>
            <person name="Peterson J."/>
            <person name="Van Aken S."/>
            <person name="Pai G."/>
            <person name="Militscher J."/>
            <person name="Sellers P."/>
            <person name="Gill J.E."/>
            <person name="Feldblyum T.V."/>
            <person name="Preuss D."/>
            <person name="Lin X."/>
            <person name="Nierman W.C."/>
            <person name="Salzberg S.L."/>
            <person name="White O."/>
            <person name="Venter J.C."/>
            <person name="Fraser C.M."/>
            <person name="Kaneko T."/>
            <person name="Nakamura Y."/>
            <person name="Sato S."/>
            <person name="Kato T."/>
            <person name="Asamizu E."/>
            <person name="Sasamoto S."/>
            <person name="Kimura T."/>
            <person name="Idesawa K."/>
            <person name="Kawashima K."/>
            <person name="Kishida Y."/>
            <person name="Kiyokawa C."/>
            <person name="Kohara M."/>
            <person name="Matsumoto M."/>
            <person name="Matsuno A."/>
            <person name="Muraki A."/>
            <person name="Nakayama S."/>
            <person name="Nakazaki N."/>
            <person name="Shinpo S."/>
            <person name="Takeuchi C."/>
            <person name="Wada T."/>
            <person name="Watanabe A."/>
            <person name="Yamada M."/>
            <person name="Yasuda M."/>
            <person name="Tabata S."/>
        </authorList>
    </citation>
    <scope>NUCLEOTIDE SEQUENCE [LARGE SCALE GENOMIC DNA]</scope>
    <source>
        <strain>cv. Columbia</strain>
    </source>
</reference>
<reference key="2">
    <citation type="journal article" date="2017" name="Plant J.">
        <title>Araport11: a complete reannotation of the Arabidopsis thaliana reference genome.</title>
        <authorList>
            <person name="Cheng C.Y."/>
            <person name="Krishnakumar V."/>
            <person name="Chan A.P."/>
            <person name="Thibaud-Nissen F."/>
            <person name="Schobel S."/>
            <person name="Town C.D."/>
        </authorList>
    </citation>
    <scope>GENOME REANNOTATION</scope>
    <source>
        <strain>cv. Columbia</strain>
    </source>
</reference>
<reference key="3">
    <citation type="journal article" date="2007" name="Plant Physiol.">
        <title>A putative hydroxysteroid dehydrogenase involved in regulating plant growth and development.</title>
        <authorList>
            <person name="Li F."/>
            <person name="Asami T."/>
            <person name="Wu X."/>
            <person name="Tsang E.W."/>
            <person name="Cutler A.J."/>
        </authorList>
    </citation>
    <scope>GENE FAMILY</scope>
</reference>
<reference key="4">
    <citation type="journal article" date="2009" name="Plant Cell Physiol.">
        <title>Regulation of HSD1 in seeds of Arabidopsis thaliana.</title>
        <authorList>
            <person name="Baud S."/>
            <person name="Dichow N.R."/>
            <person name="Kelemen Z."/>
            <person name="d'Andrea S."/>
            <person name="To A."/>
            <person name="Berger N."/>
            <person name="Canonge M."/>
            <person name="Kronenberger J."/>
            <person name="Viterbo D."/>
            <person name="Dubreucq B."/>
            <person name="Lepiniec L."/>
            <person name="Chardot T."/>
            <person name="Miquel M."/>
        </authorList>
    </citation>
    <scope>GENE FAMILY</scope>
</reference>
<proteinExistence type="inferred from homology"/>
<protein>
    <recommendedName>
        <fullName>11-beta-hydroxysteroid dehydrogenase-like 2</fullName>
        <ecNumber>1.1.1.-</ecNumber>
    </recommendedName>
    <alternativeName>
        <fullName>17-beta-hydroxysteroid dehydrogenase-like 2</fullName>
        <ecNumber>1.1.1.-</ecNumber>
    </alternativeName>
    <alternativeName>
        <fullName>Hydroxysteroid dehydrogenase 2</fullName>
        <shortName>AtHSD2</shortName>
    </alternativeName>
</protein>